<reference key="1">
    <citation type="journal article" date="1998" name="Nature">
        <title>The complete genome of the hyperthermophilic bacterium Aquifex aeolicus.</title>
        <authorList>
            <person name="Deckert G."/>
            <person name="Warren P.V."/>
            <person name="Gaasterland T."/>
            <person name="Young W.G."/>
            <person name="Lenox A.L."/>
            <person name="Graham D.E."/>
            <person name="Overbeek R."/>
            <person name="Snead M.A."/>
            <person name="Keller M."/>
            <person name="Aujay M."/>
            <person name="Huber R."/>
            <person name="Feldman R.A."/>
            <person name="Short J.M."/>
            <person name="Olsen G.J."/>
            <person name="Swanson R.V."/>
        </authorList>
    </citation>
    <scope>NUCLEOTIDE SEQUENCE [LARGE SCALE GENOMIC DNA]</scope>
    <source>
        <strain>VF5</strain>
    </source>
</reference>
<name>YZ27_AQUAE</name>
<geneLocation type="plasmid">
    <name>ece1</name>
</geneLocation>
<gene>
    <name type="ordered locus">aq_aa27</name>
</gene>
<accession>O66418</accession>
<protein>
    <recommendedName>
        <fullName>Uncharacterized protein aq_aa27</fullName>
    </recommendedName>
</protein>
<organism>
    <name type="scientific">Aquifex aeolicus (strain VF5)</name>
    <dbReference type="NCBI Taxonomy" id="224324"/>
    <lineage>
        <taxon>Bacteria</taxon>
        <taxon>Pseudomonadati</taxon>
        <taxon>Aquificota</taxon>
        <taxon>Aquificia</taxon>
        <taxon>Aquificales</taxon>
        <taxon>Aquificaceae</taxon>
        <taxon>Aquifex</taxon>
    </lineage>
</organism>
<keyword id="KW-0614">Plasmid</keyword>
<keyword id="KW-1185">Reference proteome</keyword>
<proteinExistence type="predicted"/>
<dbReference type="EMBL" id="AE000667">
    <property type="protein sequence ID" value="AAC07970.1"/>
    <property type="molecule type" value="Genomic_DNA"/>
</dbReference>
<dbReference type="RefSeq" id="NP_046418.1">
    <property type="nucleotide sequence ID" value="NC_001880.1"/>
</dbReference>
<dbReference type="RefSeq" id="WP_010890564.1">
    <property type="nucleotide sequence ID" value="NC_001880.1"/>
</dbReference>
<dbReference type="EnsemblBacteria" id="AAC07970">
    <property type="protein sequence ID" value="AAC07970"/>
    <property type="gene ID" value="aq_aa27"/>
</dbReference>
<dbReference type="KEGG" id="aae:aq_aa27"/>
<dbReference type="HOGENOM" id="CLU_1072169_0_0_0"/>
<dbReference type="InParanoid" id="O66418"/>
<dbReference type="OrthoDB" id="5618772at2"/>
<dbReference type="Proteomes" id="UP000000798">
    <property type="component" value="Plasmid ece1"/>
</dbReference>
<dbReference type="InterPro" id="IPR027417">
    <property type="entry name" value="P-loop_NTPase"/>
</dbReference>
<dbReference type="SUPFAM" id="SSF52540">
    <property type="entry name" value="P-loop containing nucleoside triphosphate hydrolases"/>
    <property type="match status" value="2"/>
</dbReference>
<sequence>MIKEFEKNEKVKNVVLNYYYTKVINSPIFNEAQKSLVRKKAVEESAEMFQKLAEKKKEILISPQKIQEILKNKREDKDEKVNVAVCDGEIFYNGKSVVEISIPEESVKKTVIAIKDYIELSTETSEEHRFLTGEAIIFSFYSVFLKEVREKATELMKDINKFPVFSLLIGTPKAGKTTLLNFIAKLLGTEKIYYGKLKETRNSKANTFEAILYIDNRMPVLIDEVPPEHLRDKRALGSKLKAKGIEWRLGSKKRSYVNQ</sequence>
<feature type="chain" id="PRO_0000186998" description="Uncharacterized protein aq_aa27">
    <location>
        <begin position="1"/>
        <end position="259"/>
    </location>
</feature>